<proteinExistence type="uncertain"/>
<dbReference type="EMBL" id="AP000280">
    <property type="status" value="NOT_ANNOTATED_CDS"/>
    <property type="molecule type" value="Genomic_DNA"/>
</dbReference>
<dbReference type="EMBL" id="BC117397">
    <property type="status" value="NOT_ANNOTATED_CDS"/>
    <property type="molecule type" value="mRNA"/>
</dbReference>
<dbReference type="EMBL" id="BC117399">
    <property type="status" value="NOT_ANNOTATED_CDS"/>
    <property type="molecule type" value="mRNA"/>
</dbReference>
<dbReference type="SMR" id="Q17RA5"/>
<dbReference type="BioMuta" id="HGNC:1290"/>
<dbReference type="UCSC" id="uc032qcz.2">
    <property type="organism name" value="human"/>
</dbReference>
<dbReference type="AGR" id="HGNC:1290"/>
<dbReference type="GeneCards" id="EPCIP-AS1"/>
<dbReference type="HGNC" id="HGNC:1290">
    <property type="gene designation" value="EPCIP-AS1"/>
</dbReference>
<dbReference type="neXtProt" id="NX_Q17RA5"/>
<dbReference type="InParanoid" id="Q17RA5"/>
<dbReference type="PAN-GO" id="Q17RA5">
    <property type="GO annotations" value="0 GO annotations based on evolutionary models"/>
</dbReference>
<dbReference type="PhylomeDB" id="Q17RA5"/>
<dbReference type="TreeFam" id="TF353998"/>
<dbReference type="PathwayCommons" id="Q17RA5"/>
<dbReference type="ChiTaRS" id="C21orf62-AS1">
    <property type="organism name" value="human"/>
</dbReference>
<dbReference type="Pharos" id="Q17RA5">
    <property type="development level" value="Tdark"/>
</dbReference>
<dbReference type="Proteomes" id="UP000005640">
    <property type="component" value="Unplaced"/>
</dbReference>
<dbReference type="RNAct" id="Q17RA5">
    <property type="molecule type" value="protein"/>
</dbReference>
<name>CMAS1_HUMAN</name>
<sequence length="79" mass="8913">MHHVRQLMMPICPMALNSTTSSSTTFGAFRIMTLNVEEWATAWKVLILLEAAVEEEKRSEEKRILVCGTCGTRSSQKNL</sequence>
<reference key="1">
    <citation type="journal article" date="2000" name="Nature">
        <title>The DNA sequence of human chromosome 21.</title>
        <authorList>
            <person name="Hattori M."/>
            <person name="Fujiyama A."/>
            <person name="Taylor T.D."/>
            <person name="Watanabe H."/>
            <person name="Yada T."/>
            <person name="Park H.-S."/>
            <person name="Toyoda A."/>
            <person name="Ishii K."/>
            <person name="Totoki Y."/>
            <person name="Choi D.-K."/>
            <person name="Groner Y."/>
            <person name="Soeda E."/>
            <person name="Ohki M."/>
            <person name="Takagi T."/>
            <person name="Sakaki Y."/>
            <person name="Taudien S."/>
            <person name="Blechschmidt K."/>
            <person name="Polley A."/>
            <person name="Menzel U."/>
            <person name="Delabar J."/>
            <person name="Kumpf K."/>
            <person name="Lehmann R."/>
            <person name="Patterson D."/>
            <person name="Reichwald K."/>
            <person name="Rump A."/>
            <person name="Schillhabel M."/>
            <person name="Schudy A."/>
            <person name="Zimmermann W."/>
            <person name="Rosenthal A."/>
            <person name="Kudoh J."/>
            <person name="Shibuya K."/>
            <person name="Kawasaki K."/>
            <person name="Asakawa S."/>
            <person name="Shintani A."/>
            <person name="Sasaki T."/>
            <person name="Nagamine K."/>
            <person name="Mitsuyama S."/>
            <person name="Antonarakis S.E."/>
            <person name="Minoshima S."/>
            <person name="Shimizu N."/>
            <person name="Nordsiek G."/>
            <person name="Hornischer K."/>
            <person name="Brandt P."/>
            <person name="Scharfe M."/>
            <person name="Schoen O."/>
            <person name="Desario A."/>
            <person name="Reichelt J."/>
            <person name="Kauer G."/>
            <person name="Bloecker H."/>
            <person name="Ramser J."/>
            <person name="Beck A."/>
            <person name="Klages S."/>
            <person name="Hennig S."/>
            <person name="Riesselmann L."/>
            <person name="Dagand E."/>
            <person name="Wehrmeyer S."/>
            <person name="Borzym K."/>
            <person name="Gardiner K."/>
            <person name="Nizetic D."/>
            <person name="Francis F."/>
            <person name="Lehrach H."/>
            <person name="Reinhardt R."/>
            <person name="Yaspo M.-L."/>
        </authorList>
    </citation>
    <scope>NUCLEOTIDE SEQUENCE [LARGE SCALE GENOMIC DNA]</scope>
</reference>
<reference key="2">
    <citation type="journal article" date="2004" name="Genome Res.">
        <title>The status, quality, and expansion of the NIH full-length cDNA project: the Mammalian Gene Collection (MGC).</title>
        <authorList>
            <consortium name="The MGC Project Team"/>
        </authorList>
    </citation>
    <scope>NUCLEOTIDE SEQUENCE [LARGE SCALE MRNA]</scope>
    <source>
        <tissue>Brain</tissue>
    </source>
</reference>
<accession>Q17RA5</accession>
<feature type="chain" id="PRO_0000307769" description="Putative uncharacterized protein EPCIP-AS1">
    <location>
        <begin position="1"/>
        <end position="79"/>
    </location>
</feature>
<evidence type="ECO:0000305" key="1"/>
<evidence type="ECO:0000312" key="2">
    <source>
        <dbReference type="HGNC" id="HGNC:1290"/>
    </source>
</evidence>
<protein>
    <recommendedName>
        <fullName evidence="1">Putative uncharacterized protein EPCIP-AS1</fullName>
    </recommendedName>
    <alternativeName>
        <fullName evidence="2">C21orf62 antisense RNA 1</fullName>
    </alternativeName>
    <alternativeName>
        <fullName evidence="1">C21orf62 antisense gene protein 1</fullName>
    </alternativeName>
    <alternativeName>
        <fullName evidence="2">EPCIP antisense RNA 1</fullName>
    </alternativeName>
</protein>
<keyword id="KW-1185">Reference proteome</keyword>
<comment type="caution">
    <text evidence="1">Product of a dubious CDS prediction.</text>
</comment>
<gene>
    <name evidence="2" type="primary">EPCIP-AS1</name>
    <name evidence="2" type="synonym">C21orf49</name>
    <name evidence="2" type="synonym">C21orf62-AS1</name>
</gene>
<organism>
    <name type="scientific">Homo sapiens</name>
    <name type="common">Human</name>
    <dbReference type="NCBI Taxonomy" id="9606"/>
    <lineage>
        <taxon>Eukaryota</taxon>
        <taxon>Metazoa</taxon>
        <taxon>Chordata</taxon>
        <taxon>Craniata</taxon>
        <taxon>Vertebrata</taxon>
        <taxon>Euteleostomi</taxon>
        <taxon>Mammalia</taxon>
        <taxon>Eutheria</taxon>
        <taxon>Euarchontoglires</taxon>
        <taxon>Primates</taxon>
        <taxon>Haplorrhini</taxon>
        <taxon>Catarrhini</taxon>
        <taxon>Hominidae</taxon>
        <taxon>Homo</taxon>
    </lineage>
</organism>